<gene>
    <name type="ordered locus">BruAb2_1033</name>
</gene>
<accession>Q8VQK6</accession>
<accession>Q576M5</accession>
<sequence length="332" mass="36610">MTISLKTAPLLEVSNLSVDFRTDGGWINAVDDVNFTLAPRETLGLVGESGSGKSVTALSLLRLHDQRNSRLGGSVRYKGEDLFTLATSRLRQIRGHEIAMVFQDPIHTLNPVLTIGRQIEEGLRLHHGLQGREARKRAIELLDRVRIPDAARRIDEYPHRMSGGQRQRVMIAIAIAGDPKILIADEPTTALDVTVQAQIMELLRNLRDELSMSVILISHDLGLVSEFADRAMVMYAGQPVETGPIDKIFDEPLHPYTEGLLSAIPDLDDDLDRLPTIPGSIPEPSRRPPGCRFAPRCTFAQASCVKPQPIMSLTGGRASRCPPRLPTEECVL</sequence>
<dbReference type="EC" id="7.4.2.-"/>
<dbReference type="EMBL" id="AF454951">
    <property type="protein sequence ID" value="AAL59343.1"/>
    <property type="molecule type" value="Genomic_DNA"/>
</dbReference>
<dbReference type="EMBL" id="AE017224">
    <property type="protein sequence ID" value="AAX76409.1"/>
    <property type="molecule type" value="Genomic_DNA"/>
</dbReference>
<dbReference type="RefSeq" id="WP_002965564.1">
    <property type="nucleotide sequence ID" value="NC_006933.1"/>
</dbReference>
<dbReference type="SMR" id="Q8VQK6"/>
<dbReference type="EnsemblBacteria" id="AAX76409">
    <property type="protein sequence ID" value="AAX76409"/>
    <property type="gene ID" value="BruAb2_1033"/>
</dbReference>
<dbReference type="KEGG" id="bmb:BruAb2_1033"/>
<dbReference type="HOGENOM" id="CLU_000604_1_23_5"/>
<dbReference type="Proteomes" id="UP000000540">
    <property type="component" value="Chromosome II"/>
</dbReference>
<dbReference type="GO" id="GO:0005886">
    <property type="term" value="C:plasma membrane"/>
    <property type="evidence" value="ECO:0007669"/>
    <property type="project" value="UniProtKB-SubCell"/>
</dbReference>
<dbReference type="GO" id="GO:0005524">
    <property type="term" value="F:ATP binding"/>
    <property type="evidence" value="ECO:0007669"/>
    <property type="project" value="UniProtKB-KW"/>
</dbReference>
<dbReference type="GO" id="GO:0016887">
    <property type="term" value="F:ATP hydrolysis activity"/>
    <property type="evidence" value="ECO:0007669"/>
    <property type="project" value="InterPro"/>
</dbReference>
<dbReference type="GO" id="GO:0015833">
    <property type="term" value="P:peptide transport"/>
    <property type="evidence" value="ECO:0007669"/>
    <property type="project" value="UniProtKB-KW"/>
</dbReference>
<dbReference type="GO" id="GO:0015031">
    <property type="term" value="P:protein transport"/>
    <property type="evidence" value="ECO:0007669"/>
    <property type="project" value="UniProtKB-KW"/>
</dbReference>
<dbReference type="CDD" id="cd03257">
    <property type="entry name" value="ABC_NikE_OppD_transporters"/>
    <property type="match status" value="1"/>
</dbReference>
<dbReference type="FunFam" id="3.40.50.300:FF:000016">
    <property type="entry name" value="Oligopeptide ABC transporter ATP-binding component"/>
    <property type="match status" value="1"/>
</dbReference>
<dbReference type="Gene3D" id="3.40.50.300">
    <property type="entry name" value="P-loop containing nucleotide triphosphate hydrolases"/>
    <property type="match status" value="1"/>
</dbReference>
<dbReference type="InterPro" id="IPR003593">
    <property type="entry name" value="AAA+_ATPase"/>
</dbReference>
<dbReference type="InterPro" id="IPR050388">
    <property type="entry name" value="ABC_Ni/Peptide_Import"/>
</dbReference>
<dbReference type="InterPro" id="IPR003439">
    <property type="entry name" value="ABC_transporter-like_ATP-bd"/>
</dbReference>
<dbReference type="InterPro" id="IPR017871">
    <property type="entry name" value="ABC_transporter-like_CS"/>
</dbReference>
<dbReference type="InterPro" id="IPR013563">
    <property type="entry name" value="Oligopep_ABC_C"/>
</dbReference>
<dbReference type="InterPro" id="IPR027417">
    <property type="entry name" value="P-loop_NTPase"/>
</dbReference>
<dbReference type="NCBIfam" id="TIGR01727">
    <property type="entry name" value="oligo_HPY"/>
    <property type="match status" value="1"/>
</dbReference>
<dbReference type="PANTHER" id="PTHR43297:SF2">
    <property type="entry name" value="DIPEPTIDE TRANSPORT ATP-BINDING PROTEIN DPPD"/>
    <property type="match status" value="1"/>
</dbReference>
<dbReference type="PANTHER" id="PTHR43297">
    <property type="entry name" value="OLIGOPEPTIDE TRANSPORT ATP-BINDING PROTEIN APPD"/>
    <property type="match status" value="1"/>
</dbReference>
<dbReference type="Pfam" id="PF00005">
    <property type="entry name" value="ABC_tran"/>
    <property type="match status" value="1"/>
</dbReference>
<dbReference type="Pfam" id="PF08352">
    <property type="entry name" value="oligo_HPY"/>
    <property type="match status" value="1"/>
</dbReference>
<dbReference type="SMART" id="SM00382">
    <property type="entry name" value="AAA"/>
    <property type="match status" value="1"/>
</dbReference>
<dbReference type="SUPFAM" id="SSF52540">
    <property type="entry name" value="P-loop containing nucleoside triphosphate hydrolases"/>
    <property type="match status" value="1"/>
</dbReference>
<dbReference type="PROSITE" id="PS00211">
    <property type="entry name" value="ABC_TRANSPORTER_1"/>
    <property type="match status" value="1"/>
</dbReference>
<dbReference type="PROSITE" id="PS50893">
    <property type="entry name" value="ABC_TRANSPORTER_2"/>
    <property type="match status" value="1"/>
</dbReference>
<comment type="function">
    <text evidence="1">Probably part of an ABC transporter complex that could be involved in peptide import. Probably responsible for energy coupling to the transport system (By similarity).</text>
</comment>
<comment type="subunit">
    <text evidence="3">The complex is composed of two ATP-binding proteins (BruAb2_1033 and BruAb2_1034), two transmembrane proteins (BruAb2_1031 and BruAb2_1032) and a solute-binding protein (BruAb2_1030).</text>
</comment>
<comment type="subcellular location">
    <subcellularLocation>
        <location evidence="3">Cell inner membrane</location>
        <topology evidence="3">Peripheral membrane protein</topology>
    </subcellularLocation>
</comment>
<comment type="similarity">
    <text evidence="3">Belongs to the ABC transporter superfamily.</text>
</comment>
<proteinExistence type="inferred from homology"/>
<feature type="chain" id="PRO_0000290156" description="Putative peptide import ATP-binding protein BruAb2_1033">
    <location>
        <begin position="1"/>
        <end position="332"/>
    </location>
</feature>
<feature type="domain" description="ABC transporter" evidence="2">
    <location>
        <begin position="11"/>
        <end position="261"/>
    </location>
</feature>
<feature type="binding site" evidence="2">
    <location>
        <begin position="47"/>
        <end position="54"/>
    </location>
    <ligand>
        <name>ATP</name>
        <dbReference type="ChEBI" id="CHEBI:30616"/>
    </ligand>
</feature>
<protein>
    <recommendedName>
        <fullName>Putative peptide import ATP-binding protein BruAb2_1033</fullName>
        <ecNumber>7.4.2.-</ecNumber>
    </recommendedName>
</protein>
<organism>
    <name type="scientific">Brucella abortus biovar 1 (strain 9-941)</name>
    <dbReference type="NCBI Taxonomy" id="262698"/>
    <lineage>
        <taxon>Bacteria</taxon>
        <taxon>Pseudomonadati</taxon>
        <taxon>Pseudomonadota</taxon>
        <taxon>Alphaproteobacteria</taxon>
        <taxon>Hyphomicrobiales</taxon>
        <taxon>Brucellaceae</taxon>
        <taxon>Brucella/Ochrobactrum group</taxon>
        <taxon>Brucella</taxon>
    </lineage>
</organism>
<reference key="1">
    <citation type="submission" date="2001-12" db="EMBL/GenBank/DDBJ databases">
        <title>Tn1953, a new element from Brucella abortus.</title>
        <authorList>
            <person name="Bricker B.J."/>
        </authorList>
    </citation>
    <scope>NUCLEOTIDE SEQUENCE [GENOMIC DNA]</scope>
    <source>
        <strain>544 / Biovar 1</strain>
    </source>
</reference>
<reference key="2">
    <citation type="journal article" date="2005" name="J. Bacteriol.">
        <title>Completion of the genome sequence of Brucella abortus and comparison to the highly similar genomes of Brucella melitensis and Brucella suis.</title>
        <authorList>
            <person name="Halling S.M."/>
            <person name="Peterson-Burch B.D."/>
            <person name="Bricker B.J."/>
            <person name="Zuerner R.L."/>
            <person name="Qing Z."/>
            <person name="Li L.-L."/>
            <person name="Kapur V."/>
            <person name="Alt D.P."/>
            <person name="Olsen S.C."/>
        </authorList>
    </citation>
    <scope>NUCLEOTIDE SEQUENCE [LARGE SCALE GENOMIC DNA]</scope>
    <source>
        <strain>9-941</strain>
    </source>
</reference>
<keyword id="KW-0067">ATP-binding</keyword>
<keyword id="KW-0997">Cell inner membrane</keyword>
<keyword id="KW-1003">Cell membrane</keyword>
<keyword id="KW-0472">Membrane</keyword>
<keyword id="KW-0547">Nucleotide-binding</keyword>
<keyword id="KW-0571">Peptide transport</keyword>
<keyword id="KW-0653">Protein transport</keyword>
<keyword id="KW-1278">Translocase</keyword>
<keyword id="KW-0813">Transport</keyword>
<name>Y1033_BRUAB</name>
<evidence type="ECO:0000250" key="1"/>
<evidence type="ECO:0000255" key="2">
    <source>
        <dbReference type="PROSITE-ProRule" id="PRU00434"/>
    </source>
</evidence>
<evidence type="ECO:0000305" key="3"/>